<evidence type="ECO:0000250" key="1">
    <source>
        <dbReference type="UniProtKB" id="Q0CCX5"/>
    </source>
</evidence>
<evidence type="ECO:0000250" key="2">
    <source>
        <dbReference type="UniProtKB" id="Q0CCY3"/>
    </source>
</evidence>
<evidence type="ECO:0000269" key="3">
    <source>
    </source>
</evidence>
<evidence type="ECO:0000269" key="4">
    <source>
    </source>
</evidence>
<evidence type="ECO:0000269" key="5">
    <source>
    </source>
</evidence>
<evidence type="ECO:0000303" key="6">
    <source>
    </source>
</evidence>
<evidence type="ECO:0000303" key="7">
    <source>
    </source>
</evidence>
<evidence type="ECO:0000305" key="8"/>
<evidence type="ECO:0000305" key="9">
    <source>
    </source>
</evidence>
<name>MDPL_EMENI</name>
<feature type="chain" id="PRO_0000437100" description="Baeyer-Villiger oxidase mdpL">
    <location>
        <begin position="1"/>
        <end position="446"/>
    </location>
</feature>
<proteinExistence type="inferred from homology"/>
<keyword id="KW-0560">Oxidoreductase</keyword>
<keyword id="KW-1185">Reference proteome</keyword>
<accession>C8VQ61</accession>
<accession>Q5BH28</accession>
<gene>
    <name evidence="6" type="primary">mdpL</name>
    <name evidence="6" type="synonym">tynL</name>
    <name type="ORF">ANIA_10023</name>
</gene>
<protein>
    <recommendedName>
        <fullName evidence="7">Baeyer-Villiger oxidase mdpL</fullName>
        <ecNumber evidence="9">1.-.-.-</ecNumber>
    </recommendedName>
    <alternativeName>
        <fullName evidence="6">Monodictyphenone synthesis protein L</fullName>
    </alternativeName>
</protein>
<organism>
    <name type="scientific">Emericella nidulans (strain FGSC A4 / ATCC 38163 / CBS 112.46 / NRRL 194 / M139)</name>
    <name type="common">Aspergillus nidulans</name>
    <dbReference type="NCBI Taxonomy" id="227321"/>
    <lineage>
        <taxon>Eukaryota</taxon>
        <taxon>Fungi</taxon>
        <taxon>Dikarya</taxon>
        <taxon>Ascomycota</taxon>
        <taxon>Pezizomycotina</taxon>
        <taxon>Eurotiomycetes</taxon>
        <taxon>Eurotiomycetidae</taxon>
        <taxon>Eurotiales</taxon>
        <taxon>Aspergillaceae</taxon>
        <taxon>Aspergillus</taxon>
        <taxon>Aspergillus subgen. Nidulantes</taxon>
    </lineage>
</organism>
<dbReference type="EC" id="1.-.-.-" evidence="9"/>
<dbReference type="EMBL" id="BN001308">
    <property type="protein sequence ID" value="CBF90088.1"/>
    <property type="molecule type" value="Genomic_DNA"/>
</dbReference>
<dbReference type="EMBL" id="AACD01000005">
    <property type="protein sequence ID" value="EAA66025.1"/>
    <property type="status" value="ALT_SEQ"/>
    <property type="molecule type" value="Genomic_DNA"/>
</dbReference>
<dbReference type="RefSeq" id="XP_657756.1">
    <property type="nucleotide sequence ID" value="XM_652664.1"/>
</dbReference>
<dbReference type="SMR" id="C8VQ61"/>
<dbReference type="STRING" id="227321.C8VQ61"/>
<dbReference type="EnsemblFungi" id="CBF90088">
    <property type="protein sequence ID" value="CBF90088"/>
    <property type="gene ID" value="ANIA_10023"/>
</dbReference>
<dbReference type="GeneID" id="2875925"/>
<dbReference type="KEGG" id="ani:ANIA_10023"/>
<dbReference type="VEuPathDB" id="FungiDB:AN10023"/>
<dbReference type="eggNOG" id="ENOG502S69W">
    <property type="taxonomic scope" value="Eukaryota"/>
</dbReference>
<dbReference type="HOGENOM" id="CLU_019145_2_1_1"/>
<dbReference type="InParanoid" id="C8VQ61"/>
<dbReference type="OMA" id="KHHCFWG"/>
<dbReference type="OrthoDB" id="10004862at2759"/>
<dbReference type="Proteomes" id="UP000000560">
    <property type="component" value="Chromosome VIII"/>
</dbReference>
<dbReference type="GO" id="GO:0016491">
    <property type="term" value="F:oxidoreductase activity"/>
    <property type="evidence" value="ECO:0007669"/>
    <property type="project" value="UniProtKB-KW"/>
</dbReference>
<dbReference type="GO" id="GO:1900815">
    <property type="term" value="P:monodictyphenone biosynthetic process"/>
    <property type="evidence" value="ECO:0000315"/>
    <property type="project" value="AspGD"/>
</dbReference>
<dbReference type="GO" id="GO:0044550">
    <property type="term" value="P:secondary metabolite biosynthetic process"/>
    <property type="evidence" value="ECO:0000315"/>
    <property type="project" value="AspGD"/>
</dbReference>
<dbReference type="GO" id="GO:2001307">
    <property type="term" value="P:xanthone-containing compound biosynthetic process"/>
    <property type="evidence" value="ECO:0000315"/>
    <property type="project" value="AspGD"/>
</dbReference>
<dbReference type="InterPro" id="IPR025337">
    <property type="entry name" value="Questin_oxidase-like"/>
</dbReference>
<dbReference type="PANTHER" id="PTHR35870:SF7">
    <property type="entry name" value="BAEYER-VILLIGER OXIDASE MDPL"/>
    <property type="match status" value="1"/>
</dbReference>
<dbReference type="PANTHER" id="PTHR35870">
    <property type="entry name" value="PROTEIN, PUTATIVE (AFU_ORTHOLOGUE AFUA_5G03330)-RELATED"/>
    <property type="match status" value="1"/>
</dbReference>
<dbReference type="Pfam" id="PF14027">
    <property type="entry name" value="Questin_oxidase"/>
    <property type="match status" value="1"/>
</dbReference>
<comment type="function">
    <text evidence="2 3 4 5">Baeyer-Villiger oxidase; part of the gene cluster that mediates the biosynthesis of monodictyphenone, a prenyl xanthone derivative (PubMed:20139316, PubMed:21351751, PubMed:22730213). The pathway begins with the synthesis of atrochrysone thioester by the polyketide synthase (PKS) mdpG (PubMed:20139316). The atrochrysone carboxyl ACP thioesterase mdpF then breaks the thioester bond and releases the atrochrysone carboxylic acid from mdpG (PubMed:20139316). The atrochrysone carboxylic acid is then converted to atrochrysone which is further transformed into emodin anthrone (PubMed:20139316). The next step is performed by the anthrone oxygenase mdpH that catalyzes the oxidation of emodinanthrone to emodin (By similarity). Emodin is further modified to yield monodictyphenone via several steps involving mdpB, mdpC mdpJ, mdpK and mdpL (PubMed:20139316, PubMed:21351751). These enzymes with xptA, xptB and xptC are also proposed to be involved in the synthesis of shamixanthone from emodin (PubMed:22730213). Especially, direct reduction of emodin by the short chain dehydrogenase mdpC followed by dehydration catalyzed by the scytalone dehydratase-like protein mdpB gives loss of oxygen and formation of chrysophanol intermediate in two simple steps (PubMed:22730213).</text>
</comment>
<comment type="cofactor">
    <cofactor evidence="1">
        <name>NADPH</name>
        <dbReference type="ChEBI" id="CHEBI:57783"/>
    </cofactor>
</comment>
<comment type="pathway">
    <text evidence="3 4 5">Secondary metabolite biosynthesis.</text>
</comment>
<comment type="disruption phenotype">
    <text evidence="3 4 5">Impairs the production of monodictyphenone, but still enables the synthesis of intermediates until emodin (PubMed:20139316, PubMed:21351751). Results in major accumulation of chrysophanol and its 6-hydroxymethyl shunt product aloe-emodin (PubMed:22730213).</text>
</comment>
<comment type="similarity">
    <text evidence="8">Belongs to the AflY oxidoreductase family.</text>
</comment>
<comment type="sequence caution" evidence="8">
    <conflict type="erroneous gene model prediction">
        <sequence resource="EMBL-CDS" id="EAA66025"/>
    </conflict>
    <text>The predicted gene AN0152 has been split into 2 genes: ANIA_10044 and ANIA_10023.</text>
</comment>
<reference key="1">
    <citation type="journal article" date="2005" name="Nature">
        <title>Sequencing of Aspergillus nidulans and comparative analysis with A. fumigatus and A. oryzae.</title>
        <authorList>
            <person name="Galagan J.E."/>
            <person name="Calvo S.E."/>
            <person name="Cuomo C."/>
            <person name="Ma L.-J."/>
            <person name="Wortman J.R."/>
            <person name="Batzoglou S."/>
            <person name="Lee S.-I."/>
            <person name="Bastuerkmen M."/>
            <person name="Spevak C.C."/>
            <person name="Clutterbuck J."/>
            <person name="Kapitonov V."/>
            <person name="Jurka J."/>
            <person name="Scazzocchio C."/>
            <person name="Farman M.L."/>
            <person name="Butler J."/>
            <person name="Purcell S."/>
            <person name="Harris S."/>
            <person name="Braus G.H."/>
            <person name="Draht O."/>
            <person name="Busch S."/>
            <person name="D'Enfert C."/>
            <person name="Bouchier C."/>
            <person name="Goldman G.H."/>
            <person name="Bell-Pedersen D."/>
            <person name="Griffiths-Jones S."/>
            <person name="Doonan J.H."/>
            <person name="Yu J."/>
            <person name="Vienken K."/>
            <person name="Pain A."/>
            <person name="Freitag M."/>
            <person name="Selker E.U."/>
            <person name="Archer D.B."/>
            <person name="Penalva M.A."/>
            <person name="Oakley B.R."/>
            <person name="Momany M."/>
            <person name="Tanaka T."/>
            <person name="Kumagai T."/>
            <person name="Asai K."/>
            <person name="Machida M."/>
            <person name="Nierman W.C."/>
            <person name="Denning D.W."/>
            <person name="Caddick M.X."/>
            <person name="Hynes M."/>
            <person name="Paoletti M."/>
            <person name="Fischer R."/>
            <person name="Miller B.L."/>
            <person name="Dyer P.S."/>
            <person name="Sachs M.S."/>
            <person name="Osmani S.A."/>
            <person name="Birren B.W."/>
        </authorList>
    </citation>
    <scope>NUCLEOTIDE SEQUENCE [LARGE SCALE GENOMIC DNA]</scope>
    <source>
        <strain>FGSC A4 / ATCC 38163 / CBS 112.46 / NRRL 194 / M139</strain>
    </source>
</reference>
<reference key="2">
    <citation type="journal article" date="2009" name="Fungal Genet. Biol.">
        <title>The 2008 update of the Aspergillus nidulans genome annotation: a community effort.</title>
        <authorList>
            <person name="Wortman J.R."/>
            <person name="Gilsenan J.M."/>
            <person name="Joardar V."/>
            <person name="Deegan J."/>
            <person name="Clutterbuck J."/>
            <person name="Andersen M.R."/>
            <person name="Archer D."/>
            <person name="Bencina M."/>
            <person name="Braus G."/>
            <person name="Coutinho P."/>
            <person name="von Dohren H."/>
            <person name="Doonan J."/>
            <person name="Driessen A.J."/>
            <person name="Durek P."/>
            <person name="Espeso E."/>
            <person name="Fekete E."/>
            <person name="Flipphi M."/>
            <person name="Estrada C.G."/>
            <person name="Geysens S."/>
            <person name="Goldman G."/>
            <person name="de Groot P.W."/>
            <person name="Hansen K."/>
            <person name="Harris S.D."/>
            <person name="Heinekamp T."/>
            <person name="Helmstaedt K."/>
            <person name="Henrissat B."/>
            <person name="Hofmann G."/>
            <person name="Homan T."/>
            <person name="Horio T."/>
            <person name="Horiuchi H."/>
            <person name="James S."/>
            <person name="Jones M."/>
            <person name="Karaffa L."/>
            <person name="Karanyi Z."/>
            <person name="Kato M."/>
            <person name="Keller N."/>
            <person name="Kelly D.E."/>
            <person name="Kiel J.A."/>
            <person name="Kim J.M."/>
            <person name="van der Klei I.J."/>
            <person name="Klis F.M."/>
            <person name="Kovalchuk A."/>
            <person name="Krasevec N."/>
            <person name="Kubicek C.P."/>
            <person name="Liu B."/>
            <person name="Maccabe A."/>
            <person name="Meyer V."/>
            <person name="Mirabito P."/>
            <person name="Miskei M."/>
            <person name="Mos M."/>
            <person name="Mullins J."/>
            <person name="Nelson D.R."/>
            <person name="Nielsen J."/>
            <person name="Oakley B.R."/>
            <person name="Osmani S.A."/>
            <person name="Pakula T."/>
            <person name="Paszewski A."/>
            <person name="Paulsen I."/>
            <person name="Pilsyk S."/>
            <person name="Pocsi I."/>
            <person name="Punt P.J."/>
            <person name="Ram A.F."/>
            <person name="Ren Q."/>
            <person name="Robellet X."/>
            <person name="Robson G."/>
            <person name="Seiboth B."/>
            <person name="van Solingen P."/>
            <person name="Specht T."/>
            <person name="Sun J."/>
            <person name="Taheri-Talesh N."/>
            <person name="Takeshita N."/>
            <person name="Ussery D."/>
            <person name="vanKuyk P.A."/>
            <person name="Visser H."/>
            <person name="van de Vondervoort P.J."/>
            <person name="de Vries R.P."/>
            <person name="Walton J."/>
            <person name="Xiang X."/>
            <person name="Xiong Y."/>
            <person name="Zeng A.P."/>
            <person name="Brandt B.W."/>
            <person name="Cornell M.J."/>
            <person name="van den Hondel C.A."/>
            <person name="Visser J."/>
            <person name="Oliver S.G."/>
            <person name="Turner G."/>
        </authorList>
    </citation>
    <scope>GENOME REANNOTATION</scope>
    <source>
        <strain>FGSC A4 / ATCC 38163 / CBS 112.46 / NRRL 194 / M139</strain>
    </source>
</reference>
<reference key="3">
    <citation type="journal article" date="2010" name="Appl. Environ. Microbiol.">
        <title>Characterization of the Aspergillus nidulans monodictyphenone gene cluster.</title>
        <authorList>
            <person name="Chiang Y.M."/>
            <person name="Szewczyk E."/>
            <person name="Davidson A.D."/>
            <person name="Entwistle R."/>
            <person name="Keller N.P."/>
            <person name="Wang C.C."/>
            <person name="Oakley B.R."/>
        </authorList>
    </citation>
    <scope>FUNCTION</scope>
    <scope>DISRUPTION PHENOTYPE</scope>
    <scope>PATHWAY</scope>
</reference>
<reference key="4">
    <citation type="journal article" date="2011" name="J. Am. Chem. Soc.">
        <title>Genome-based deletion analysis reveals the prenyl xanthone biosynthesis pathway in Aspergillus nidulans.</title>
        <authorList>
            <person name="Sanchez J.F."/>
            <person name="Entwistle R."/>
            <person name="Hung J.H."/>
            <person name="Yaegashi J."/>
            <person name="Jain S."/>
            <person name="Chiang Y.M."/>
            <person name="Wang C.C."/>
            <person name="Oakley B.R."/>
        </authorList>
    </citation>
    <scope>FUNCTION</scope>
    <scope>DISRUPTION PHENOTYPE</scope>
    <scope>PATHWAY</scope>
</reference>
<reference key="5">
    <citation type="journal article" date="2012" name="ChemBioChem">
        <title>Genetic and biosynthetic studies of the fungal prenylated xanthone shamixanthone and related metabolites in Aspergillus spp. revisited.</title>
        <authorList>
            <person name="Simpson T.J."/>
        </authorList>
    </citation>
    <scope>FUNCTION</scope>
    <scope>DISRUPTION PHENOTYPE</scope>
    <scope>PATHWAY</scope>
</reference>
<sequence length="446" mass="51019">MSSSINILSTKLGQNIYAQTPPSQTLTLTNHLLQKNHDTLHIFFRNLNGHNHLVHNLLTRLVLGATPEQLQTAYDDDLPTQRAMPPLVPSIVERLSDNSYFESQITQIDQYTNFLRFFEAEIDRRDSWKDVVIEYVFSRSPIAEKILPLMYDGAFHSIIHLGLGVEFEQPGIIAEALAQAAAHDSFGTDYFFLTAEKRAAGRNEEGETLVNLLQKIRDTPKLVEAGRVQGLIGTMKMRKSILVNAADEIIDIASRFKVTEETLARKTAEMLNLCAYLAGASQRTKDGYEPKIDFFFMHCVTSSIFFSILGRQDWISMRDRVRLVEWKGRLDLMWYALCGVPELDFEFVRTYRGERTGTMSWKELFAIVNEQHDDGHVAKFVRALKNGQEVCGQFEDGEEFMVKGDMWLRIARMAYETTIETNMQNRWVVMAGMDGAWKDFKVQSSD</sequence>